<sequence>MALGALLLLLGVLGTPLAPGARGSEAEGQLIKKLFSNYDSSVRPAREVGDRVGVSIGLTLAQLISLNEKDEEMSTKVYLDLEWTDYRLSWDPAEHDGIDSLRITAESVWLPDVVLLNNNDGNFDVALDINVVVSFEGSVRWQPPGLYRSSCSIQVTYFPFDWQNCTMVFSSYSYDSSEVSLKTGLDPEGEERQEVYIHEGTFIENGQWEIIHKPSRLIQLPGDQRGGKEGHHEEVIFYLIIRRKPLFYLVNVIAPCILITLLAIFVFYLPPDAGEKMGLSIFALLTLTVFLLLLADKVPETSLAVPIIIKYLMFTMVLVTFSVILSVVVLNLHHRSPHTHQMPFWVRQIFIHKLPPYLGLKRPKPERDQLPEPHHSLSPRSGWGRGTDEYFIRKPPSDFLFPKLNRFQPESSAPDLRRFIDGPTRAVGLPQELREVISSISYMARQLQEQEDHDALKEDWQFVAMVVDRLFLWTFIVFTSVGTLVIFLDATYHLPPPEPFP</sequence>
<reference key="1">
    <citation type="journal article" date="1986" name="J. Biol. Chem.">
        <title>A universal oligonucleotide probe for acetylcholine receptor genes. Selection and sequencing of cDNA clones for the mouse muscle beta subunit.</title>
        <authorList>
            <person name="Buonanno A."/>
            <person name="Mudd J."/>
            <person name="Shah V."/>
            <person name="Merlie J.P."/>
        </authorList>
    </citation>
    <scope>NUCLEOTIDE SEQUENCE [MRNA]</scope>
</reference>
<reference key="2">
    <citation type="journal article" date="1989" name="J. Biol. Chem.">
        <title>Isolation and characterization of the beta and epsilon subunit genes of mouse muscle acetylcholine receptor.</title>
        <authorList>
            <person name="Buonanno A."/>
            <person name="Mudd J."/>
            <person name="Merlie J.P."/>
        </authorList>
    </citation>
    <scope>NUCLEOTIDE SEQUENCE [GENOMIC DNA]</scope>
</reference>
<reference key="3">
    <citation type="journal article" date="2005" name="Science">
        <title>The transcriptional landscape of the mammalian genome.</title>
        <authorList>
            <person name="Carninci P."/>
            <person name="Kasukawa T."/>
            <person name="Katayama S."/>
            <person name="Gough J."/>
            <person name="Frith M.C."/>
            <person name="Maeda N."/>
            <person name="Oyama R."/>
            <person name="Ravasi T."/>
            <person name="Lenhard B."/>
            <person name="Wells C."/>
            <person name="Kodzius R."/>
            <person name="Shimokawa K."/>
            <person name="Bajic V.B."/>
            <person name="Brenner S.E."/>
            <person name="Batalov S."/>
            <person name="Forrest A.R."/>
            <person name="Zavolan M."/>
            <person name="Davis M.J."/>
            <person name="Wilming L.G."/>
            <person name="Aidinis V."/>
            <person name="Allen J.E."/>
            <person name="Ambesi-Impiombato A."/>
            <person name="Apweiler R."/>
            <person name="Aturaliya R.N."/>
            <person name="Bailey T.L."/>
            <person name="Bansal M."/>
            <person name="Baxter L."/>
            <person name="Beisel K.W."/>
            <person name="Bersano T."/>
            <person name="Bono H."/>
            <person name="Chalk A.M."/>
            <person name="Chiu K.P."/>
            <person name="Choudhary V."/>
            <person name="Christoffels A."/>
            <person name="Clutterbuck D.R."/>
            <person name="Crowe M.L."/>
            <person name="Dalla E."/>
            <person name="Dalrymple B.P."/>
            <person name="de Bono B."/>
            <person name="Della Gatta G."/>
            <person name="di Bernardo D."/>
            <person name="Down T."/>
            <person name="Engstrom P."/>
            <person name="Fagiolini M."/>
            <person name="Faulkner G."/>
            <person name="Fletcher C.F."/>
            <person name="Fukushima T."/>
            <person name="Furuno M."/>
            <person name="Futaki S."/>
            <person name="Gariboldi M."/>
            <person name="Georgii-Hemming P."/>
            <person name="Gingeras T.R."/>
            <person name="Gojobori T."/>
            <person name="Green R.E."/>
            <person name="Gustincich S."/>
            <person name="Harbers M."/>
            <person name="Hayashi Y."/>
            <person name="Hensch T.K."/>
            <person name="Hirokawa N."/>
            <person name="Hill D."/>
            <person name="Huminiecki L."/>
            <person name="Iacono M."/>
            <person name="Ikeo K."/>
            <person name="Iwama A."/>
            <person name="Ishikawa T."/>
            <person name="Jakt M."/>
            <person name="Kanapin A."/>
            <person name="Katoh M."/>
            <person name="Kawasawa Y."/>
            <person name="Kelso J."/>
            <person name="Kitamura H."/>
            <person name="Kitano H."/>
            <person name="Kollias G."/>
            <person name="Krishnan S.P."/>
            <person name="Kruger A."/>
            <person name="Kummerfeld S.K."/>
            <person name="Kurochkin I.V."/>
            <person name="Lareau L.F."/>
            <person name="Lazarevic D."/>
            <person name="Lipovich L."/>
            <person name="Liu J."/>
            <person name="Liuni S."/>
            <person name="McWilliam S."/>
            <person name="Madan Babu M."/>
            <person name="Madera M."/>
            <person name="Marchionni L."/>
            <person name="Matsuda H."/>
            <person name="Matsuzawa S."/>
            <person name="Miki H."/>
            <person name="Mignone F."/>
            <person name="Miyake S."/>
            <person name="Morris K."/>
            <person name="Mottagui-Tabar S."/>
            <person name="Mulder N."/>
            <person name="Nakano N."/>
            <person name="Nakauchi H."/>
            <person name="Ng P."/>
            <person name="Nilsson R."/>
            <person name="Nishiguchi S."/>
            <person name="Nishikawa S."/>
            <person name="Nori F."/>
            <person name="Ohara O."/>
            <person name="Okazaki Y."/>
            <person name="Orlando V."/>
            <person name="Pang K.C."/>
            <person name="Pavan W.J."/>
            <person name="Pavesi G."/>
            <person name="Pesole G."/>
            <person name="Petrovsky N."/>
            <person name="Piazza S."/>
            <person name="Reed J."/>
            <person name="Reid J.F."/>
            <person name="Ring B.Z."/>
            <person name="Ringwald M."/>
            <person name="Rost B."/>
            <person name="Ruan Y."/>
            <person name="Salzberg S.L."/>
            <person name="Sandelin A."/>
            <person name="Schneider C."/>
            <person name="Schoenbach C."/>
            <person name="Sekiguchi K."/>
            <person name="Semple C.A."/>
            <person name="Seno S."/>
            <person name="Sessa L."/>
            <person name="Sheng Y."/>
            <person name="Shibata Y."/>
            <person name="Shimada H."/>
            <person name="Shimada K."/>
            <person name="Silva D."/>
            <person name="Sinclair B."/>
            <person name="Sperling S."/>
            <person name="Stupka E."/>
            <person name="Sugiura K."/>
            <person name="Sultana R."/>
            <person name="Takenaka Y."/>
            <person name="Taki K."/>
            <person name="Tammoja K."/>
            <person name="Tan S.L."/>
            <person name="Tang S."/>
            <person name="Taylor M.S."/>
            <person name="Tegner J."/>
            <person name="Teichmann S.A."/>
            <person name="Ueda H.R."/>
            <person name="van Nimwegen E."/>
            <person name="Verardo R."/>
            <person name="Wei C.L."/>
            <person name="Yagi K."/>
            <person name="Yamanishi H."/>
            <person name="Zabarovsky E."/>
            <person name="Zhu S."/>
            <person name="Zimmer A."/>
            <person name="Hide W."/>
            <person name="Bult C."/>
            <person name="Grimmond S.M."/>
            <person name="Teasdale R.D."/>
            <person name="Liu E.T."/>
            <person name="Brusic V."/>
            <person name="Quackenbush J."/>
            <person name="Wahlestedt C."/>
            <person name="Mattick J.S."/>
            <person name="Hume D.A."/>
            <person name="Kai C."/>
            <person name="Sasaki D."/>
            <person name="Tomaru Y."/>
            <person name="Fukuda S."/>
            <person name="Kanamori-Katayama M."/>
            <person name="Suzuki M."/>
            <person name="Aoki J."/>
            <person name="Arakawa T."/>
            <person name="Iida J."/>
            <person name="Imamura K."/>
            <person name="Itoh M."/>
            <person name="Kato T."/>
            <person name="Kawaji H."/>
            <person name="Kawagashira N."/>
            <person name="Kawashima T."/>
            <person name="Kojima M."/>
            <person name="Kondo S."/>
            <person name="Konno H."/>
            <person name="Nakano K."/>
            <person name="Ninomiya N."/>
            <person name="Nishio T."/>
            <person name="Okada M."/>
            <person name="Plessy C."/>
            <person name="Shibata K."/>
            <person name="Shiraki T."/>
            <person name="Suzuki S."/>
            <person name="Tagami M."/>
            <person name="Waki K."/>
            <person name="Watahiki A."/>
            <person name="Okamura-Oho Y."/>
            <person name="Suzuki H."/>
            <person name="Kawai J."/>
            <person name="Hayashizaki Y."/>
        </authorList>
    </citation>
    <scope>NUCLEOTIDE SEQUENCE [LARGE SCALE MRNA]</scope>
    <source>
        <strain>C57BL/6J</strain>
        <tissue>Eye</tissue>
    </source>
</reference>
<reference key="4">
    <citation type="journal article" date="2009" name="PLoS Biol.">
        <title>Lineage-specific biology revealed by a finished genome assembly of the mouse.</title>
        <authorList>
            <person name="Church D.M."/>
            <person name="Goodstadt L."/>
            <person name="Hillier L.W."/>
            <person name="Zody M.C."/>
            <person name="Goldstein S."/>
            <person name="She X."/>
            <person name="Bult C.J."/>
            <person name="Agarwala R."/>
            <person name="Cherry J.L."/>
            <person name="DiCuccio M."/>
            <person name="Hlavina W."/>
            <person name="Kapustin Y."/>
            <person name="Meric P."/>
            <person name="Maglott D."/>
            <person name="Birtle Z."/>
            <person name="Marques A.C."/>
            <person name="Graves T."/>
            <person name="Zhou S."/>
            <person name="Teague B."/>
            <person name="Potamousis K."/>
            <person name="Churas C."/>
            <person name="Place M."/>
            <person name="Herschleb J."/>
            <person name="Runnheim R."/>
            <person name="Forrest D."/>
            <person name="Amos-Landgraf J."/>
            <person name="Schwartz D.C."/>
            <person name="Cheng Z."/>
            <person name="Lindblad-Toh K."/>
            <person name="Eichler E.E."/>
            <person name="Ponting C.P."/>
        </authorList>
    </citation>
    <scope>NUCLEOTIDE SEQUENCE [LARGE SCALE GENOMIC DNA]</scope>
    <source>
        <strain>C57BL/6J</strain>
    </source>
</reference>
<proteinExistence type="evidence at transcript level"/>
<feature type="signal peptide">
    <location>
        <begin position="1"/>
        <end position="23"/>
    </location>
</feature>
<feature type="chain" id="PRO_0000000316" description="Acetylcholine receptor subunit beta">
    <location>
        <begin position="24"/>
        <end position="501"/>
    </location>
</feature>
<feature type="topological domain" description="Extracellular" evidence="4">
    <location>
        <begin position="24"/>
        <end position="244"/>
    </location>
</feature>
<feature type="transmembrane region" description="Helical" evidence="4">
    <location>
        <begin position="245"/>
        <end position="269"/>
    </location>
</feature>
<feature type="transmembrane region" description="Helical" evidence="4">
    <location>
        <begin position="277"/>
        <end position="295"/>
    </location>
</feature>
<feature type="transmembrane region" description="Helical" evidence="4">
    <location>
        <begin position="311"/>
        <end position="332"/>
    </location>
</feature>
<feature type="topological domain" description="Cytoplasmic" evidence="4">
    <location>
        <begin position="333"/>
        <end position="469"/>
    </location>
</feature>
<feature type="transmembrane region" description="Helical" evidence="4">
    <location>
        <begin position="470"/>
        <end position="488"/>
    </location>
</feature>
<feature type="region of interest" description="Disordered" evidence="5">
    <location>
        <begin position="362"/>
        <end position="382"/>
    </location>
</feature>
<feature type="compositionally biased region" description="Basic and acidic residues" evidence="5">
    <location>
        <begin position="363"/>
        <end position="375"/>
    </location>
</feature>
<feature type="modified residue" description="Phosphotyrosine; by Tyr-kinases" evidence="1">
    <location>
        <position position="390"/>
    </location>
</feature>
<feature type="glycosylation site" description="N-linked (GlcNAc...) asparagine" evidence="4">
    <location>
        <position position="164"/>
    </location>
</feature>
<feature type="disulfide bond" evidence="1">
    <location>
        <begin position="151"/>
        <end position="165"/>
    </location>
</feature>
<protein>
    <recommendedName>
        <fullName>Acetylcholine receptor subunit beta</fullName>
    </recommendedName>
</protein>
<dbReference type="EMBL" id="M14537">
    <property type="protein sequence ID" value="AAA37154.1"/>
    <property type="molecule type" value="mRNA"/>
</dbReference>
<dbReference type="EMBL" id="J04699">
    <property type="protein sequence ID" value="AAA37156.1"/>
    <property type="molecule type" value="Genomic_DNA"/>
</dbReference>
<dbReference type="EMBL" id="AK087554">
    <property type="protein sequence ID" value="BAC39924.1"/>
    <property type="molecule type" value="mRNA"/>
</dbReference>
<dbReference type="EMBL" id="AL603707">
    <property type="status" value="NOT_ANNOTATED_CDS"/>
    <property type="molecule type" value="Genomic_DNA"/>
</dbReference>
<dbReference type="CCDS" id="CCDS24910.1"/>
<dbReference type="PIR" id="A33358">
    <property type="entry name" value="A25338"/>
</dbReference>
<dbReference type="RefSeq" id="NP_033731.3">
    <property type="nucleotide sequence ID" value="NM_009601.4"/>
</dbReference>
<dbReference type="SMR" id="P09690"/>
<dbReference type="BioGRID" id="197935">
    <property type="interactions" value="2"/>
</dbReference>
<dbReference type="ComplexPortal" id="CPX-252">
    <property type="entry name" value="Muscle-type nicotinic acetylcholine receptor complex, alpha1-beta1-delta-gamma"/>
</dbReference>
<dbReference type="ComplexPortal" id="CPX-257">
    <property type="entry name" value="Muscle-type nicotinic acetylcholine receptor complex, alpha1-beta1-delta-epsilon"/>
</dbReference>
<dbReference type="FunCoup" id="P09690">
    <property type="interactions" value="397"/>
</dbReference>
<dbReference type="IntAct" id="P09690">
    <property type="interactions" value="4"/>
</dbReference>
<dbReference type="MINT" id="P09690"/>
<dbReference type="STRING" id="10090.ENSMUSP00000047270"/>
<dbReference type="BindingDB" id="P09690"/>
<dbReference type="ChEMBL" id="CHEMBL3038460"/>
<dbReference type="ChEMBL" id="CHEMBL3137264"/>
<dbReference type="GlyCosmos" id="P09690">
    <property type="glycosylation" value="1 site, No reported glycans"/>
</dbReference>
<dbReference type="GlyGen" id="P09690">
    <property type="glycosylation" value="1 site"/>
</dbReference>
<dbReference type="iPTMnet" id="P09690"/>
<dbReference type="PhosphoSitePlus" id="P09690"/>
<dbReference type="SwissPalm" id="P09690"/>
<dbReference type="PaxDb" id="10090-ENSMUSP00000047270"/>
<dbReference type="ProteomicsDB" id="286069"/>
<dbReference type="ABCD" id="P09690">
    <property type="antibodies" value="1 sequenced antibody"/>
</dbReference>
<dbReference type="Antibodypedia" id="992">
    <property type="antibodies" value="257 antibodies from 34 providers"/>
</dbReference>
<dbReference type="DNASU" id="11443"/>
<dbReference type="Ensembl" id="ENSMUST00000045971.9">
    <property type="protein sequence ID" value="ENSMUSP00000047270.9"/>
    <property type="gene ID" value="ENSMUSG00000041189.10"/>
</dbReference>
<dbReference type="GeneID" id="11443"/>
<dbReference type="KEGG" id="mmu:11443"/>
<dbReference type="UCSC" id="uc007jrq.2">
    <property type="organism name" value="mouse"/>
</dbReference>
<dbReference type="AGR" id="MGI:87890"/>
<dbReference type="CTD" id="1140"/>
<dbReference type="MGI" id="MGI:87890">
    <property type="gene designation" value="Chrnb1"/>
</dbReference>
<dbReference type="VEuPathDB" id="HostDB:ENSMUSG00000041189"/>
<dbReference type="eggNOG" id="KOG3645">
    <property type="taxonomic scope" value="Eukaryota"/>
</dbReference>
<dbReference type="GeneTree" id="ENSGT00940000158661"/>
<dbReference type="HOGENOM" id="CLU_018074_1_4_1"/>
<dbReference type="InParanoid" id="P09690"/>
<dbReference type="OMA" id="PCILITV"/>
<dbReference type="OrthoDB" id="5975154at2759"/>
<dbReference type="PhylomeDB" id="P09690"/>
<dbReference type="TreeFam" id="TF315605"/>
<dbReference type="BioGRID-ORCS" id="11443">
    <property type="hits" value="3 hits in 78 CRISPR screens"/>
</dbReference>
<dbReference type="ChiTaRS" id="Chrnb1">
    <property type="organism name" value="mouse"/>
</dbReference>
<dbReference type="PRO" id="PR:P09690"/>
<dbReference type="Proteomes" id="UP000000589">
    <property type="component" value="Chromosome 11"/>
</dbReference>
<dbReference type="RNAct" id="P09690">
    <property type="molecule type" value="protein"/>
</dbReference>
<dbReference type="Bgee" id="ENSMUSG00000041189">
    <property type="expression patterns" value="Expressed in hindlimb stylopod muscle and 147 other cell types or tissues"/>
</dbReference>
<dbReference type="GO" id="GO:0005892">
    <property type="term" value="C:acetylcholine-gated channel complex"/>
    <property type="evidence" value="ECO:0000314"/>
    <property type="project" value="MGI"/>
</dbReference>
<dbReference type="GO" id="GO:0031594">
    <property type="term" value="C:neuromuscular junction"/>
    <property type="evidence" value="ECO:0000314"/>
    <property type="project" value="SynGO"/>
</dbReference>
<dbReference type="GO" id="GO:0005886">
    <property type="term" value="C:plasma membrane"/>
    <property type="evidence" value="ECO:0000314"/>
    <property type="project" value="MGI"/>
</dbReference>
<dbReference type="GO" id="GO:0099634">
    <property type="term" value="C:postsynaptic specialization membrane"/>
    <property type="evidence" value="ECO:0000314"/>
    <property type="project" value="SynGO"/>
</dbReference>
<dbReference type="GO" id="GO:0042166">
    <property type="term" value="F:acetylcholine binding"/>
    <property type="evidence" value="ECO:0000315"/>
    <property type="project" value="UniProtKB"/>
</dbReference>
<dbReference type="GO" id="GO:0015464">
    <property type="term" value="F:acetylcholine receptor activity"/>
    <property type="evidence" value="ECO:0007669"/>
    <property type="project" value="Ensembl"/>
</dbReference>
<dbReference type="GO" id="GO:0022848">
    <property type="term" value="F:acetylcholine-gated monoatomic cation-selective channel activity"/>
    <property type="evidence" value="ECO:0000316"/>
    <property type="project" value="MGI"/>
</dbReference>
<dbReference type="GO" id="GO:0035095">
    <property type="term" value="P:behavioral response to nicotine"/>
    <property type="evidence" value="ECO:0007669"/>
    <property type="project" value="Ensembl"/>
</dbReference>
<dbReference type="GO" id="GO:0055001">
    <property type="term" value="P:muscle cell development"/>
    <property type="evidence" value="ECO:0007669"/>
    <property type="project" value="Ensembl"/>
</dbReference>
<dbReference type="GO" id="GO:0007274">
    <property type="term" value="P:neuromuscular synaptic transmission"/>
    <property type="evidence" value="ECO:0007669"/>
    <property type="project" value="Ensembl"/>
</dbReference>
<dbReference type="GO" id="GO:0001941">
    <property type="term" value="P:postsynaptic membrane organization"/>
    <property type="evidence" value="ECO:0007669"/>
    <property type="project" value="Ensembl"/>
</dbReference>
<dbReference type="GO" id="GO:0042391">
    <property type="term" value="P:regulation of membrane potential"/>
    <property type="evidence" value="ECO:0000316"/>
    <property type="project" value="MGI"/>
</dbReference>
<dbReference type="GO" id="GO:0003009">
    <property type="term" value="P:skeletal muscle contraction"/>
    <property type="evidence" value="ECO:0007669"/>
    <property type="project" value="Ensembl"/>
</dbReference>
<dbReference type="CDD" id="cd19024">
    <property type="entry name" value="LGIC_ECD_nAChR_B1"/>
    <property type="match status" value="1"/>
</dbReference>
<dbReference type="CDD" id="cd19064">
    <property type="entry name" value="LGIC_TM_nAChR"/>
    <property type="match status" value="1"/>
</dbReference>
<dbReference type="FunFam" id="1.20.58.390:FF:000026">
    <property type="entry name" value="Cholinergic receptor nicotinic beta 1 subunit"/>
    <property type="match status" value="1"/>
</dbReference>
<dbReference type="FunFam" id="2.70.170.10:FF:000012">
    <property type="entry name" value="Nicotinic acetylcholine receptor subunit gamma"/>
    <property type="match status" value="1"/>
</dbReference>
<dbReference type="Gene3D" id="2.70.170.10">
    <property type="entry name" value="Neurotransmitter-gated ion-channel ligand-binding domain"/>
    <property type="match status" value="1"/>
</dbReference>
<dbReference type="Gene3D" id="1.20.58.390">
    <property type="entry name" value="Neurotransmitter-gated ion-channel transmembrane domain"/>
    <property type="match status" value="2"/>
</dbReference>
<dbReference type="InterPro" id="IPR006202">
    <property type="entry name" value="Neur_chan_lig-bd"/>
</dbReference>
<dbReference type="InterPro" id="IPR036734">
    <property type="entry name" value="Neur_chan_lig-bd_sf"/>
</dbReference>
<dbReference type="InterPro" id="IPR006201">
    <property type="entry name" value="Neur_channel"/>
</dbReference>
<dbReference type="InterPro" id="IPR036719">
    <property type="entry name" value="Neuro-gated_channel_TM_sf"/>
</dbReference>
<dbReference type="InterPro" id="IPR038050">
    <property type="entry name" value="Neuro_actylchol_rec"/>
</dbReference>
<dbReference type="InterPro" id="IPR006029">
    <property type="entry name" value="Neurotrans-gated_channel_TM"/>
</dbReference>
<dbReference type="InterPro" id="IPR018000">
    <property type="entry name" value="Neurotransmitter_ion_chnl_CS"/>
</dbReference>
<dbReference type="InterPro" id="IPR002394">
    <property type="entry name" value="Nicotinic_acetylcholine_rcpt"/>
</dbReference>
<dbReference type="NCBIfam" id="TIGR00860">
    <property type="entry name" value="LIC"/>
    <property type="match status" value="1"/>
</dbReference>
<dbReference type="PANTHER" id="PTHR18945">
    <property type="entry name" value="NEUROTRANSMITTER GATED ION CHANNEL"/>
    <property type="match status" value="1"/>
</dbReference>
<dbReference type="Pfam" id="PF02931">
    <property type="entry name" value="Neur_chan_LBD"/>
    <property type="match status" value="1"/>
</dbReference>
<dbReference type="Pfam" id="PF02932">
    <property type="entry name" value="Neur_chan_memb"/>
    <property type="match status" value="1"/>
</dbReference>
<dbReference type="PRINTS" id="PR00254">
    <property type="entry name" value="NICOTINICR"/>
</dbReference>
<dbReference type="PRINTS" id="PR00252">
    <property type="entry name" value="NRIONCHANNEL"/>
</dbReference>
<dbReference type="SUPFAM" id="SSF90112">
    <property type="entry name" value="Neurotransmitter-gated ion-channel transmembrane pore"/>
    <property type="match status" value="1"/>
</dbReference>
<dbReference type="SUPFAM" id="SSF63712">
    <property type="entry name" value="Nicotinic receptor ligand binding domain-like"/>
    <property type="match status" value="1"/>
</dbReference>
<dbReference type="PROSITE" id="PS00236">
    <property type="entry name" value="NEUROTR_ION_CHANNEL"/>
    <property type="match status" value="1"/>
</dbReference>
<evidence type="ECO:0000250" key="1"/>
<evidence type="ECO:0000250" key="2">
    <source>
        <dbReference type="UniProtKB" id="P04758"/>
    </source>
</evidence>
<evidence type="ECO:0000250" key="3">
    <source>
        <dbReference type="UniProtKB" id="P11230"/>
    </source>
</evidence>
<evidence type="ECO:0000255" key="4"/>
<evidence type="ECO:0000256" key="5">
    <source>
        <dbReference type="SAM" id="MobiDB-lite"/>
    </source>
</evidence>
<evidence type="ECO:0000305" key="6"/>
<comment type="function">
    <text>After binding acetylcholine, the AChR responds by an extensive change in conformation that affects all subunits and leads to opening of an ion-conducting channel across the plasma membrane.</text>
</comment>
<comment type="catalytic activity">
    <reaction evidence="2">
        <text>K(+)(in) = K(+)(out)</text>
        <dbReference type="Rhea" id="RHEA:29463"/>
        <dbReference type="ChEBI" id="CHEBI:29103"/>
    </reaction>
</comment>
<comment type="catalytic activity">
    <reaction evidence="2">
        <text>Na(+)(in) = Na(+)(out)</text>
        <dbReference type="Rhea" id="RHEA:34963"/>
        <dbReference type="ChEBI" id="CHEBI:29101"/>
    </reaction>
</comment>
<comment type="subunit">
    <text evidence="3">Pentamer of two alpha chains, and one each of the beta, delta, and gamma (in immature muscle) or epsilon (in mature muscle) chains. The muscle heteropentamer composed of alpha-1, beta-1, delta, epsilon subunits interacts with the alpha-conotoxin ImII.</text>
</comment>
<comment type="subcellular location">
    <subcellularLocation>
        <location>Postsynaptic cell membrane</location>
        <topology>Multi-pass membrane protein</topology>
    </subcellularLocation>
    <subcellularLocation>
        <location>Cell membrane</location>
        <topology>Multi-pass membrane protein</topology>
    </subcellularLocation>
</comment>
<comment type="similarity">
    <text evidence="6">Belongs to the ligand-gated ion channel (TC 1.A.9) family. Acetylcholine receptor (TC 1.A.9.1) subfamily. Beta-1/CHRNB1 sub-subfamily.</text>
</comment>
<gene>
    <name type="primary">Chrnb1</name>
    <name type="synonym">Acrb</name>
</gene>
<organism>
    <name type="scientific">Mus musculus</name>
    <name type="common">Mouse</name>
    <dbReference type="NCBI Taxonomy" id="10090"/>
    <lineage>
        <taxon>Eukaryota</taxon>
        <taxon>Metazoa</taxon>
        <taxon>Chordata</taxon>
        <taxon>Craniata</taxon>
        <taxon>Vertebrata</taxon>
        <taxon>Euteleostomi</taxon>
        <taxon>Mammalia</taxon>
        <taxon>Eutheria</taxon>
        <taxon>Euarchontoglires</taxon>
        <taxon>Glires</taxon>
        <taxon>Rodentia</taxon>
        <taxon>Myomorpha</taxon>
        <taxon>Muroidea</taxon>
        <taxon>Muridae</taxon>
        <taxon>Murinae</taxon>
        <taxon>Mus</taxon>
        <taxon>Mus</taxon>
    </lineage>
</organism>
<keyword id="KW-1003">Cell membrane</keyword>
<keyword id="KW-1015">Disulfide bond</keyword>
<keyword id="KW-0325">Glycoprotein</keyword>
<keyword id="KW-0407">Ion channel</keyword>
<keyword id="KW-0406">Ion transport</keyword>
<keyword id="KW-1071">Ligand-gated ion channel</keyword>
<keyword id="KW-0472">Membrane</keyword>
<keyword id="KW-0597">Phosphoprotein</keyword>
<keyword id="KW-0628">Postsynaptic cell membrane</keyword>
<keyword id="KW-0675">Receptor</keyword>
<keyword id="KW-1185">Reference proteome</keyword>
<keyword id="KW-0732">Signal</keyword>
<keyword id="KW-0770">Synapse</keyword>
<keyword id="KW-0812">Transmembrane</keyword>
<keyword id="KW-1133">Transmembrane helix</keyword>
<keyword id="KW-0813">Transport</keyword>
<name>ACHB_MOUSE</name>
<accession>P09690</accession>
<accession>Q5F292</accession>